<gene>
    <name evidence="1" type="primary">gatC</name>
    <name type="ordered locus">Bsph_0228</name>
</gene>
<evidence type="ECO:0000255" key="1">
    <source>
        <dbReference type="HAMAP-Rule" id="MF_00122"/>
    </source>
</evidence>
<reference key="1">
    <citation type="journal article" date="2008" name="J. Bacteriol.">
        <title>Complete genome sequence of the mosquitocidal bacterium Bacillus sphaericus C3-41 and comparison with those of closely related Bacillus species.</title>
        <authorList>
            <person name="Hu X."/>
            <person name="Fan W."/>
            <person name="Han B."/>
            <person name="Liu H."/>
            <person name="Zheng D."/>
            <person name="Li Q."/>
            <person name="Dong W."/>
            <person name="Yan J."/>
            <person name="Gao M."/>
            <person name="Berry C."/>
            <person name="Yuan Z."/>
        </authorList>
    </citation>
    <scope>NUCLEOTIDE SEQUENCE [LARGE SCALE GENOMIC DNA]</scope>
    <source>
        <strain>C3-41</strain>
    </source>
</reference>
<proteinExistence type="inferred from homology"/>
<sequence>MAKLTKEEVKHVANLARLAITEEEAEKFAEQLGKITDFAEQLNELDTANVEPTTHVLPLVNVMREDVAVKGLDREVMMLNVREQEDGQVKVPAIM</sequence>
<accession>B1HTW8</accession>
<comment type="function">
    <text evidence="1">Allows the formation of correctly charged Asn-tRNA(Asn) or Gln-tRNA(Gln) through the transamidation of misacylated Asp-tRNA(Asn) or Glu-tRNA(Gln) in organisms which lack either or both of asparaginyl-tRNA or glutaminyl-tRNA synthetases. The reaction takes place in the presence of glutamine and ATP through an activated phospho-Asp-tRNA(Asn) or phospho-Glu-tRNA(Gln).</text>
</comment>
<comment type="catalytic activity">
    <reaction evidence="1">
        <text>L-glutamyl-tRNA(Gln) + L-glutamine + ATP + H2O = L-glutaminyl-tRNA(Gln) + L-glutamate + ADP + phosphate + H(+)</text>
        <dbReference type="Rhea" id="RHEA:17521"/>
        <dbReference type="Rhea" id="RHEA-COMP:9681"/>
        <dbReference type="Rhea" id="RHEA-COMP:9684"/>
        <dbReference type="ChEBI" id="CHEBI:15377"/>
        <dbReference type="ChEBI" id="CHEBI:15378"/>
        <dbReference type="ChEBI" id="CHEBI:29985"/>
        <dbReference type="ChEBI" id="CHEBI:30616"/>
        <dbReference type="ChEBI" id="CHEBI:43474"/>
        <dbReference type="ChEBI" id="CHEBI:58359"/>
        <dbReference type="ChEBI" id="CHEBI:78520"/>
        <dbReference type="ChEBI" id="CHEBI:78521"/>
        <dbReference type="ChEBI" id="CHEBI:456216"/>
    </reaction>
</comment>
<comment type="catalytic activity">
    <reaction evidence="1">
        <text>L-aspartyl-tRNA(Asn) + L-glutamine + ATP + H2O = L-asparaginyl-tRNA(Asn) + L-glutamate + ADP + phosphate + 2 H(+)</text>
        <dbReference type="Rhea" id="RHEA:14513"/>
        <dbReference type="Rhea" id="RHEA-COMP:9674"/>
        <dbReference type="Rhea" id="RHEA-COMP:9677"/>
        <dbReference type="ChEBI" id="CHEBI:15377"/>
        <dbReference type="ChEBI" id="CHEBI:15378"/>
        <dbReference type="ChEBI" id="CHEBI:29985"/>
        <dbReference type="ChEBI" id="CHEBI:30616"/>
        <dbReference type="ChEBI" id="CHEBI:43474"/>
        <dbReference type="ChEBI" id="CHEBI:58359"/>
        <dbReference type="ChEBI" id="CHEBI:78515"/>
        <dbReference type="ChEBI" id="CHEBI:78516"/>
        <dbReference type="ChEBI" id="CHEBI:456216"/>
    </reaction>
</comment>
<comment type="subunit">
    <text evidence="1">Heterotrimer of A, B and C subunits.</text>
</comment>
<comment type="similarity">
    <text evidence="1">Belongs to the GatC family.</text>
</comment>
<keyword id="KW-0067">ATP-binding</keyword>
<keyword id="KW-0436">Ligase</keyword>
<keyword id="KW-0547">Nucleotide-binding</keyword>
<keyword id="KW-0648">Protein biosynthesis</keyword>
<feature type="chain" id="PRO_1000095293" description="Aspartyl/glutamyl-tRNA(Asn/Gln) amidotransferase subunit C">
    <location>
        <begin position="1"/>
        <end position="95"/>
    </location>
</feature>
<protein>
    <recommendedName>
        <fullName evidence="1">Aspartyl/glutamyl-tRNA(Asn/Gln) amidotransferase subunit C</fullName>
        <shortName evidence="1">Asp/Glu-ADT subunit C</shortName>
        <ecNumber evidence="1">6.3.5.-</ecNumber>
    </recommendedName>
</protein>
<name>GATC_LYSSC</name>
<dbReference type="EC" id="6.3.5.-" evidence="1"/>
<dbReference type="EMBL" id="CP000817">
    <property type="protein sequence ID" value="ACA37859.1"/>
    <property type="molecule type" value="Genomic_DNA"/>
</dbReference>
<dbReference type="RefSeq" id="WP_012292027.1">
    <property type="nucleotide sequence ID" value="NC_010382.1"/>
</dbReference>
<dbReference type="SMR" id="B1HTW8"/>
<dbReference type="EnsemblBacteria" id="ACA37859">
    <property type="protein sequence ID" value="ACA37859"/>
    <property type="gene ID" value="Bsph_0228"/>
</dbReference>
<dbReference type="KEGG" id="lsp:Bsph_0228"/>
<dbReference type="HOGENOM" id="CLU_105899_1_2_9"/>
<dbReference type="Proteomes" id="UP000002164">
    <property type="component" value="Chromosome"/>
</dbReference>
<dbReference type="GO" id="GO:0050566">
    <property type="term" value="F:asparaginyl-tRNA synthase (glutamine-hydrolyzing) activity"/>
    <property type="evidence" value="ECO:0007669"/>
    <property type="project" value="RHEA"/>
</dbReference>
<dbReference type="GO" id="GO:0005524">
    <property type="term" value="F:ATP binding"/>
    <property type="evidence" value="ECO:0007669"/>
    <property type="project" value="UniProtKB-KW"/>
</dbReference>
<dbReference type="GO" id="GO:0050567">
    <property type="term" value="F:glutaminyl-tRNA synthase (glutamine-hydrolyzing) activity"/>
    <property type="evidence" value="ECO:0007669"/>
    <property type="project" value="UniProtKB-UniRule"/>
</dbReference>
<dbReference type="GO" id="GO:0070681">
    <property type="term" value="P:glutaminyl-tRNAGln biosynthesis via transamidation"/>
    <property type="evidence" value="ECO:0007669"/>
    <property type="project" value="TreeGrafter"/>
</dbReference>
<dbReference type="GO" id="GO:0006450">
    <property type="term" value="P:regulation of translational fidelity"/>
    <property type="evidence" value="ECO:0007669"/>
    <property type="project" value="InterPro"/>
</dbReference>
<dbReference type="GO" id="GO:0006412">
    <property type="term" value="P:translation"/>
    <property type="evidence" value="ECO:0007669"/>
    <property type="project" value="UniProtKB-UniRule"/>
</dbReference>
<dbReference type="Gene3D" id="1.10.20.60">
    <property type="entry name" value="Glu-tRNAGln amidotransferase C subunit, N-terminal domain"/>
    <property type="match status" value="1"/>
</dbReference>
<dbReference type="HAMAP" id="MF_00122">
    <property type="entry name" value="GatC"/>
    <property type="match status" value="1"/>
</dbReference>
<dbReference type="InterPro" id="IPR036113">
    <property type="entry name" value="Asp/Glu-ADT_sf_sub_c"/>
</dbReference>
<dbReference type="InterPro" id="IPR003837">
    <property type="entry name" value="GatC"/>
</dbReference>
<dbReference type="NCBIfam" id="TIGR00135">
    <property type="entry name" value="gatC"/>
    <property type="match status" value="1"/>
</dbReference>
<dbReference type="PANTHER" id="PTHR15004">
    <property type="entry name" value="GLUTAMYL-TRNA(GLN) AMIDOTRANSFERASE SUBUNIT C, MITOCHONDRIAL"/>
    <property type="match status" value="1"/>
</dbReference>
<dbReference type="PANTHER" id="PTHR15004:SF0">
    <property type="entry name" value="GLUTAMYL-TRNA(GLN) AMIDOTRANSFERASE SUBUNIT C, MITOCHONDRIAL"/>
    <property type="match status" value="1"/>
</dbReference>
<dbReference type="Pfam" id="PF02686">
    <property type="entry name" value="GatC"/>
    <property type="match status" value="1"/>
</dbReference>
<dbReference type="SUPFAM" id="SSF141000">
    <property type="entry name" value="Glu-tRNAGln amidotransferase C subunit"/>
    <property type="match status" value="1"/>
</dbReference>
<organism>
    <name type="scientific">Lysinibacillus sphaericus (strain C3-41)</name>
    <dbReference type="NCBI Taxonomy" id="444177"/>
    <lineage>
        <taxon>Bacteria</taxon>
        <taxon>Bacillati</taxon>
        <taxon>Bacillota</taxon>
        <taxon>Bacilli</taxon>
        <taxon>Bacillales</taxon>
        <taxon>Bacillaceae</taxon>
        <taxon>Lysinibacillus</taxon>
    </lineage>
</organism>